<name>TRPD_SHEON</name>
<proteinExistence type="inferred from homology"/>
<accession>Q8ECV2</accession>
<feature type="chain" id="PRO_0000154478" description="Anthranilate phosphoribosyltransferase">
    <location>
        <begin position="1"/>
        <end position="347"/>
    </location>
</feature>
<feature type="binding site" evidence="1">
    <location>
        <position position="88"/>
    </location>
    <ligand>
        <name>5-phospho-alpha-D-ribose 1-diphosphate</name>
        <dbReference type="ChEBI" id="CHEBI:58017"/>
    </ligand>
</feature>
<feature type="binding site" evidence="1">
    <location>
        <position position="88"/>
    </location>
    <ligand>
        <name>anthranilate</name>
        <dbReference type="ChEBI" id="CHEBI:16567"/>
        <label>1</label>
    </ligand>
</feature>
<feature type="binding site" evidence="1">
    <location>
        <begin position="91"/>
        <end position="92"/>
    </location>
    <ligand>
        <name>5-phospho-alpha-D-ribose 1-diphosphate</name>
        <dbReference type="ChEBI" id="CHEBI:58017"/>
    </ligand>
</feature>
<feature type="binding site" evidence="1">
    <location>
        <position position="96"/>
    </location>
    <ligand>
        <name>5-phospho-alpha-D-ribose 1-diphosphate</name>
        <dbReference type="ChEBI" id="CHEBI:58017"/>
    </ligand>
</feature>
<feature type="binding site" evidence="1">
    <location>
        <begin position="98"/>
        <end position="101"/>
    </location>
    <ligand>
        <name>5-phospho-alpha-D-ribose 1-diphosphate</name>
        <dbReference type="ChEBI" id="CHEBI:58017"/>
    </ligand>
</feature>
<feature type="binding site" evidence="1">
    <location>
        <position position="100"/>
    </location>
    <ligand>
        <name>Mg(2+)</name>
        <dbReference type="ChEBI" id="CHEBI:18420"/>
        <label>1</label>
    </ligand>
</feature>
<feature type="binding site" evidence="1">
    <location>
        <begin position="116"/>
        <end position="124"/>
    </location>
    <ligand>
        <name>5-phospho-alpha-D-ribose 1-diphosphate</name>
        <dbReference type="ChEBI" id="CHEBI:58017"/>
    </ligand>
</feature>
<feature type="binding site" evidence="1">
    <location>
        <position position="119"/>
    </location>
    <ligand>
        <name>anthranilate</name>
        <dbReference type="ChEBI" id="CHEBI:16567"/>
        <label>1</label>
    </ligand>
</feature>
<feature type="binding site" evidence="1">
    <location>
        <position position="128"/>
    </location>
    <ligand>
        <name>5-phospho-alpha-D-ribose 1-diphosphate</name>
        <dbReference type="ChEBI" id="CHEBI:58017"/>
    </ligand>
</feature>
<feature type="binding site" evidence="1">
    <location>
        <position position="174"/>
    </location>
    <ligand>
        <name>anthranilate</name>
        <dbReference type="ChEBI" id="CHEBI:16567"/>
        <label>2</label>
    </ligand>
</feature>
<feature type="binding site" evidence="1">
    <location>
        <position position="232"/>
    </location>
    <ligand>
        <name>Mg(2+)</name>
        <dbReference type="ChEBI" id="CHEBI:18420"/>
        <label>2</label>
    </ligand>
</feature>
<feature type="binding site" evidence="1">
    <location>
        <position position="233"/>
    </location>
    <ligand>
        <name>Mg(2+)</name>
        <dbReference type="ChEBI" id="CHEBI:18420"/>
        <label>1</label>
    </ligand>
</feature>
<feature type="binding site" evidence="1">
    <location>
        <position position="233"/>
    </location>
    <ligand>
        <name>Mg(2+)</name>
        <dbReference type="ChEBI" id="CHEBI:18420"/>
        <label>2</label>
    </ligand>
</feature>
<organism>
    <name type="scientific">Shewanella oneidensis (strain ATCC 700550 / JCM 31522 / CIP 106686 / LMG 19005 / NCIMB 14063 / MR-1)</name>
    <dbReference type="NCBI Taxonomy" id="211586"/>
    <lineage>
        <taxon>Bacteria</taxon>
        <taxon>Pseudomonadati</taxon>
        <taxon>Pseudomonadota</taxon>
        <taxon>Gammaproteobacteria</taxon>
        <taxon>Alteromonadales</taxon>
        <taxon>Shewanellaceae</taxon>
        <taxon>Shewanella</taxon>
    </lineage>
</organism>
<sequence length="347" mass="36540">MSETSIQPLLDILFQGKALTREQTASLFSVLIQGEMNETVMAGMLMALKIRGETIEEISGAADAMRAAAKPFPYPESSRSQGVIDIVGTGGDGFNTINISTTAAFVAAAAGAKVAKHGNRSVSSKSGSSDLLAQFGIDLTMSPELASHCLEALNLCFLFAPHYHGGVKHAVPVRQTLKTRTLFNVLGPLINPARPEFMLLGVYSAELVTPIARVLQALGTQRAMVVHGSGLDEVALHGSTQVAELKDGEIIEYQLTPADFGVPQAHISELEGGEPAHNALITQQILQGHGCDAHTHAVAINAGCALYLCGLSESVKMGTALALSTIKTGKAYELLHKLATVSSQSQE</sequence>
<reference key="1">
    <citation type="journal article" date="2002" name="Nat. Biotechnol.">
        <title>Genome sequence of the dissimilatory metal ion-reducing bacterium Shewanella oneidensis.</title>
        <authorList>
            <person name="Heidelberg J.F."/>
            <person name="Paulsen I.T."/>
            <person name="Nelson K.E."/>
            <person name="Gaidos E.J."/>
            <person name="Nelson W.C."/>
            <person name="Read T.D."/>
            <person name="Eisen J.A."/>
            <person name="Seshadri R."/>
            <person name="Ward N.L."/>
            <person name="Methe B.A."/>
            <person name="Clayton R.A."/>
            <person name="Meyer T."/>
            <person name="Tsapin A."/>
            <person name="Scott J."/>
            <person name="Beanan M.J."/>
            <person name="Brinkac L.M."/>
            <person name="Daugherty S.C."/>
            <person name="DeBoy R.T."/>
            <person name="Dodson R.J."/>
            <person name="Durkin A.S."/>
            <person name="Haft D.H."/>
            <person name="Kolonay J.F."/>
            <person name="Madupu R."/>
            <person name="Peterson J.D."/>
            <person name="Umayam L.A."/>
            <person name="White O."/>
            <person name="Wolf A.M."/>
            <person name="Vamathevan J.J."/>
            <person name="Weidman J.F."/>
            <person name="Impraim M."/>
            <person name="Lee K."/>
            <person name="Berry K.J."/>
            <person name="Lee C."/>
            <person name="Mueller J."/>
            <person name="Khouri H.M."/>
            <person name="Gill J."/>
            <person name="Utterback T.R."/>
            <person name="McDonald L.A."/>
            <person name="Feldblyum T.V."/>
            <person name="Smith H.O."/>
            <person name="Venter J.C."/>
            <person name="Nealson K.H."/>
            <person name="Fraser C.M."/>
        </authorList>
    </citation>
    <scope>NUCLEOTIDE SEQUENCE [LARGE SCALE GENOMIC DNA]</scope>
    <source>
        <strain>ATCC 700550 / JCM 31522 / CIP 106686 / LMG 19005 / NCIMB 14063 / MR-1</strain>
    </source>
</reference>
<keyword id="KW-0028">Amino-acid biosynthesis</keyword>
<keyword id="KW-0057">Aromatic amino acid biosynthesis</keyword>
<keyword id="KW-0328">Glycosyltransferase</keyword>
<keyword id="KW-0460">Magnesium</keyword>
<keyword id="KW-0479">Metal-binding</keyword>
<keyword id="KW-1185">Reference proteome</keyword>
<keyword id="KW-0808">Transferase</keyword>
<keyword id="KW-0822">Tryptophan biosynthesis</keyword>
<dbReference type="EC" id="2.4.2.18" evidence="1"/>
<dbReference type="EMBL" id="AE014299">
    <property type="protein sequence ID" value="AAN56033.1"/>
    <property type="molecule type" value="Genomic_DNA"/>
</dbReference>
<dbReference type="RefSeq" id="NP_718589.1">
    <property type="nucleotide sequence ID" value="NC_004347.2"/>
</dbReference>
<dbReference type="RefSeq" id="WP_011072926.1">
    <property type="nucleotide sequence ID" value="NC_004347.2"/>
</dbReference>
<dbReference type="SMR" id="Q8ECV2"/>
<dbReference type="STRING" id="211586.SO_3021"/>
<dbReference type="PaxDb" id="211586-SO_3021"/>
<dbReference type="KEGG" id="son:SO_3021"/>
<dbReference type="PATRIC" id="fig|211586.12.peg.2916"/>
<dbReference type="eggNOG" id="COG0547">
    <property type="taxonomic scope" value="Bacteria"/>
</dbReference>
<dbReference type="HOGENOM" id="CLU_034315_2_1_6"/>
<dbReference type="OrthoDB" id="9806430at2"/>
<dbReference type="PhylomeDB" id="Q8ECV2"/>
<dbReference type="BioCyc" id="SONE211586:G1GMP-2795-MONOMER"/>
<dbReference type="UniPathway" id="UPA00035">
    <property type="reaction ID" value="UER00041"/>
</dbReference>
<dbReference type="Proteomes" id="UP000008186">
    <property type="component" value="Chromosome"/>
</dbReference>
<dbReference type="GO" id="GO:0005829">
    <property type="term" value="C:cytosol"/>
    <property type="evidence" value="ECO:0000318"/>
    <property type="project" value="GO_Central"/>
</dbReference>
<dbReference type="GO" id="GO:0004048">
    <property type="term" value="F:anthranilate phosphoribosyltransferase activity"/>
    <property type="evidence" value="ECO:0007669"/>
    <property type="project" value="UniProtKB-UniRule"/>
</dbReference>
<dbReference type="GO" id="GO:0000287">
    <property type="term" value="F:magnesium ion binding"/>
    <property type="evidence" value="ECO:0007669"/>
    <property type="project" value="UniProtKB-UniRule"/>
</dbReference>
<dbReference type="GO" id="GO:0000162">
    <property type="term" value="P:L-tryptophan biosynthetic process"/>
    <property type="evidence" value="ECO:0000318"/>
    <property type="project" value="GO_Central"/>
</dbReference>
<dbReference type="FunFam" id="3.40.1030.10:FF:000002">
    <property type="entry name" value="Anthranilate phosphoribosyltransferase"/>
    <property type="match status" value="1"/>
</dbReference>
<dbReference type="Gene3D" id="3.40.1030.10">
    <property type="entry name" value="Nucleoside phosphorylase/phosphoribosyltransferase catalytic domain"/>
    <property type="match status" value="1"/>
</dbReference>
<dbReference type="Gene3D" id="1.20.970.10">
    <property type="entry name" value="Transferase, Pyrimidine Nucleoside Phosphorylase, Chain C"/>
    <property type="match status" value="1"/>
</dbReference>
<dbReference type="HAMAP" id="MF_00211">
    <property type="entry name" value="TrpD"/>
    <property type="match status" value="1"/>
</dbReference>
<dbReference type="InterPro" id="IPR005940">
    <property type="entry name" value="Anthranilate_Pribosyl_Tfrase"/>
</dbReference>
<dbReference type="InterPro" id="IPR000312">
    <property type="entry name" value="Glycosyl_Trfase_fam3"/>
</dbReference>
<dbReference type="InterPro" id="IPR017459">
    <property type="entry name" value="Glycosyl_Trfase_fam3_N_dom"/>
</dbReference>
<dbReference type="InterPro" id="IPR036320">
    <property type="entry name" value="Glycosyl_Trfase_fam3_N_dom_sf"/>
</dbReference>
<dbReference type="InterPro" id="IPR035902">
    <property type="entry name" value="Nuc_phospho_transferase"/>
</dbReference>
<dbReference type="NCBIfam" id="TIGR01245">
    <property type="entry name" value="trpD"/>
    <property type="match status" value="1"/>
</dbReference>
<dbReference type="PANTHER" id="PTHR43285">
    <property type="entry name" value="ANTHRANILATE PHOSPHORIBOSYLTRANSFERASE"/>
    <property type="match status" value="1"/>
</dbReference>
<dbReference type="PANTHER" id="PTHR43285:SF2">
    <property type="entry name" value="ANTHRANILATE PHOSPHORIBOSYLTRANSFERASE"/>
    <property type="match status" value="1"/>
</dbReference>
<dbReference type="Pfam" id="PF02885">
    <property type="entry name" value="Glycos_trans_3N"/>
    <property type="match status" value="1"/>
</dbReference>
<dbReference type="Pfam" id="PF00591">
    <property type="entry name" value="Glycos_transf_3"/>
    <property type="match status" value="1"/>
</dbReference>
<dbReference type="SUPFAM" id="SSF52418">
    <property type="entry name" value="Nucleoside phosphorylase/phosphoribosyltransferase catalytic domain"/>
    <property type="match status" value="1"/>
</dbReference>
<dbReference type="SUPFAM" id="SSF47648">
    <property type="entry name" value="Nucleoside phosphorylase/phosphoribosyltransferase N-terminal domain"/>
    <property type="match status" value="1"/>
</dbReference>
<protein>
    <recommendedName>
        <fullName evidence="1">Anthranilate phosphoribosyltransferase</fullName>
        <ecNumber evidence="1">2.4.2.18</ecNumber>
    </recommendedName>
</protein>
<comment type="function">
    <text evidence="1">Catalyzes the transfer of the phosphoribosyl group of 5-phosphorylribose-1-pyrophosphate (PRPP) to anthranilate to yield N-(5'-phosphoribosyl)-anthranilate (PRA).</text>
</comment>
<comment type="catalytic activity">
    <reaction evidence="1">
        <text>N-(5-phospho-beta-D-ribosyl)anthranilate + diphosphate = 5-phospho-alpha-D-ribose 1-diphosphate + anthranilate</text>
        <dbReference type="Rhea" id="RHEA:11768"/>
        <dbReference type="ChEBI" id="CHEBI:16567"/>
        <dbReference type="ChEBI" id="CHEBI:18277"/>
        <dbReference type="ChEBI" id="CHEBI:33019"/>
        <dbReference type="ChEBI" id="CHEBI:58017"/>
        <dbReference type="EC" id="2.4.2.18"/>
    </reaction>
</comment>
<comment type="cofactor">
    <cofactor evidence="1">
        <name>Mg(2+)</name>
        <dbReference type="ChEBI" id="CHEBI:18420"/>
    </cofactor>
    <text evidence="1">Binds 2 magnesium ions per monomer.</text>
</comment>
<comment type="pathway">
    <text evidence="1">Amino-acid biosynthesis; L-tryptophan biosynthesis; L-tryptophan from chorismate: step 2/5.</text>
</comment>
<comment type="subunit">
    <text evidence="1">Homodimer.</text>
</comment>
<comment type="similarity">
    <text evidence="1">Belongs to the anthranilate phosphoribosyltransferase family.</text>
</comment>
<evidence type="ECO:0000255" key="1">
    <source>
        <dbReference type="HAMAP-Rule" id="MF_00211"/>
    </source>
</evidence>
<gene>
    <name evidence="1" type="primary">trpD</name>
    <name type="ordered locus">SO_3021</name>
</gene>